<organism>
    <name type="scientific">Shewanella oneidensis (strain ATCC 700550 / JCM 31522 / CIP 106686 / LMG 19005 / NCIMB 14063 / MR-1)</name>
    <dbReference type="NCBI Taxonomy" id="211586"/>
    <lineage>
        <taxon>Bacteria</taxon>
        <taxon>Pseudomonadati</taxon>
        <taxon>Pseudomonadota</taxon>
        <taxon>Gammaproteobacteria</taxon>
        <taxon>Alteromonadales</taxon>
        <taxon>Shewanellaceae</taxon>
        <taxon>Shewanella</taxon>
    </lineage>
</organism>
<name>ATPF_SHEON</name>
<comment type="function">
    <text evidence="1">F(1)F(0) ATP synthase produces ATP from ADP in the presence of a proton or sodium gradient. F-type ATPases consist of two structural domains, F(1) containing the extramembraneous catalytic core and F(0) containing the membrane proton channel, linked together by a central stalk and a peripheral stalk. During catalysis, ATP synthesis in the catalytic domain of F(1) is coupled via a rotary mechanism of the central stalk subunits to proton translocation.</text>
</comment>
<comment type="function">
    <text evidence="1">Component of the F(0) channel, it forms part of the peripheral stalk, linking F(1) to F(0).</text>
</comment>
<comment type="subunit">
    <text evidence="1">F-type ATPases have 2 components, F(1) - the catalytic core - and F(0) - the membrane proton channel. F(1) has five subunits: alpha(3), beta(3), gamma(1), delta(1), epsilon(1). F(0) has three main subunits: a(1), b(2) and c(10-14). The alpha and beta chains form an alternating ring which encloses part of the gamma chain. F(1) is attached to F(0) by a central stalk formed by the gamma and epsilon chains, while a peripheral stalk is formed by the delta and b chains.</text>
</comment>
<comment type="subcellular location">
    <subcellularLocation>
        <location evidence="1">Cell inner membrane</location>
        <topology evidence="1">Single-pass membrane protein</topology>
    </subcellularLocation>
</comment>
<comment type="similarity">
    <text evidence="1">Belongs to the ATPase B chain family.</text>
</comment>
<dbReference type="EMBL" id="AE014299">
    <property type="protein sequence ID" value="AAN57710.1"/>
    <property type="molecule type" value="Genomic_DNA"/>
</dbReference>
<dbReference type="RefSeq" id="NP_720267.1">
    <property type="nucleotide sequence ID" value="NC_004347.2"/>
</dbReference>
<dbReference type="RefSeq" id="WP_011074334.1">
    <property type="nucleotide sequence ID" value="NC_004347.2"/>
</dbReference>
<dbReference type="SMR" id="Q8E8B6"/>
<dbReference type="STRING" id="211586.SO_4751"/>
<dbReference type="PaxDb" id="211586-SO_4751"/>
<dbReference type="KEGG" id="son:SO_4751"/>
<dbReference type="PATRIC" id="fig|211586.12.peg.4608"/>
<dbReference type="eggNOG" id="COG0711">
    <property type="taxonomic scope" value="Bacteria"/>
</dbReference>
<dbReference type="HOGENOM" id="CLU_079215_4_5_6"/>
<dbReference type="OrthoDB" id="9788020at2"/>
<dbReference type="PhylomeDB" id="Q8E8B6"/>
<dbReference type="BioCyc" id="SONE211586:G1GMP-4396-MONOMER"/>
<dbReference type="Proteomes" id="UP000008186">
    <property type="component" value="Chromosome"/>
</dbReference>
<dbReference type="GO" id="GO:0005886">
    <property type="term" value="C:plasma membrane"/>
    <property type="evidence" value="ECO:0007669"/>
    <property type="project" value="UniProtKB-SubCell"/>
</dbReference>
<dbReference type="GO" id="GO:0045259">
    <property type="term" value="C:proton-transporting ATP synthase complex"/>
    <property type="evidence" value="ECO:0007669"/>
    <property type="project" value="UniProtKB-KW"/>
</dbReference>
<dbReference type="GO" id="GO:0046933">
    <property type="term" value="F:proton-transporting ATP synthase activity, rotational mechanism"/>
    <property type="evidence" value="ECO:0007669"/>
    <property type="project" value="UniProtKB-UniRule"/>
</dbReference>
<dbReference type="CDD" id="cd06503">
    <property type="entry name" value="ATP-synt_Fo_b"/>
    <property type="match status" value="1"/>
</dbReference>
<dbReference type="FunFam" id="1.20.5.620:FF:000001">
    <property type="entry name" value="ATP synthase subunit b"/>
    <property type="match status" value="1"/>
</dbReference>
<dbReference type="Gene3D" id="1.20.5.620">
    <property type="entry name" value="F1F0 ATP synthase subunit B, membrane domain"/>
    <property type="match status" value="1"/>
</dbReference>
<dbReference type="HAMAP" id="MF_01398">
    <property type="entry name" value="ATP_synth_b_bprime"/>
    <property type="match status" value="1"/>
</dbReference>
<dbReference type="InterPro" id="IPR028987">
    <property type="entry name" value="ATP_synth_B-like_membr_sf"/>
</dbReference>
<dbReference type="InterPro" id="IPR002146">
    <property type="entry name" value="ATP_synth_b/b'su_bac/chlpt"/>
</dbReference>
<dbReference type="InterPro" id="IPR005864">
    <property type="entry name" value="ATP_synth_F0_bsu_bac"/>
</dbReference>
<dbReference type="InterPro" id="IPR050059">
    <property type="entry name" value="ATP_synthase_B_chain"/>
</dbReference>
<dbReference type="NCBIfam" id="TIGR01144">
    <property type="entry name" value="ATP_synt_b"/>
    <property type="match status" value="1"/>
</dbReference>
<dbReference type="NCBIfam" id="NF004411">
    <property type="entry name" value="PRK05759.1-2"/>
    <property type="match status" value="1"/>
</dbReference>
<dbReference type="NCBIfam" id="NF004413">
    <property type="entry name" value="PRK05759.1-4"/>
    <property type="match status" value="1"/>
</dbReference>
<dbReference type="PANTHER" id="PTHR33445:SF1">
    <property type="entry name" value="ATP SYNTHASE SUBUNIT B"/>
    <property type="match status" value="1"/>
</dbReference>
<dbReference type="PANTHER" id="PTHR33445">
    <property type="entry name" value="ATP SYNTHASE SUBUNIT B', CHLOROPLASTIC"/>
    <property type="match status" value="1"/>
</dbReference>
<dbReference type="Pfam" id="PF00430">
    <property type="entry name" value="ATP-synt_B"/>
    <property type="match status" value="1"/>
</dbReference>
<dbReference type="SUPFAM" id="SSF81573">
    <property type="entry name" value="F1F0 ATP synthase subunit B, membrane domain"/>
    <property type="match status" value="1"/>
</dbReference>
<accession>Q8E8B6</accession>
<protein>
    <recommendedName>
        <fullName evidence="1">ATP synthase subunit b</fullName>
    </recommendedName>
    <alternativeName>
        <fullName evidence="1">ATP synthase F(0) sector subunit b</fullName>
    </alternativeName>
    <alternativeName>
        <fullName evidence="1">ATPase subunit I</fullName>
    </alternativeName>
    <alternativeName>
        <fullName evidence="1">F-type ATPase subunit b</fullName>
        <shortName evidence="1">F-ATPase subunit b</shortName>
    </alternativeName>
</protein>
<evidence type="ECO:0000255" key="1">
    <source>
        <dbReference type="HAMAP-Rule" id="MF_01398"/>
    </source>
</evidence>
<feature type="chain" id="PRO_0000368761" description="ATP synthase subunit b">
    <location>
        <begin position="1"/>
        <end position="156"/>
    </location>
</feature>
<feature type="transmembrane region" description="Helical" evidence="1">
    <location>
        <begin position="7"/>
        <end position="27"/>
    </location>
</feature>
<keyword id="KW-0066">ATP synthesis</keyword>
<keyword id="KW-0997">Cell inner membrane</keyword>
<keyword id="KW-1003">Cell membrane</keyword>
<keyword id="KW-0138">CF(0)</keyword>
<keyword id="KW-0375">Hydrogen ion transport</keyword>
<keyword id="KW-0406">Ion transport</keyword>
<keyword id="KW-0472">Membrane</keyword>
<keyword id="KW-1185">Reference proteome</keyword>
<keyword id="KW-0812">Transmembrane</keyword>
<keyword id="KW-1133">Transmembrane helix</keyword>
<keyword id="KW-0813">Transport</keyword>
<proteinExistence type="inferred from homology"/>
<reference key="1">
    <citation type="journal article" date="2002" name="Nat. Biotechnol.">
        <title>Genome sequence of the dissimilatory metal ion-reducing bacterium Shewanella oneidensis.</title>
        <authorList>
            <person name="Heidelberg J.F."/>
            <person name="Paulsen I.T."/>
            <person name="Nelson K.E."/>
            <person name="Gaidos E.J."/>
            <person name="Nelson W.C."/>
            <person name="Read T.D."/>
            <person name="Eisen J.A."/>
            <person name="Seshadri R."/>
            <person name="Ward N.L."/>
            <person name="Methe B.A."/>
            <person name="Clayton R.A."/>
            <person name="Meyer T."/>
            <person name="Tsapin A."/>
            <person name="Scott J."/>
            <person name="Beanan M.J."/>
            <person name="Brinkac L.M."/>
            <person name="Daugherty S.C."/>
            <person name="DeBoy R.T."/>
            <person name="Dodson R.J."/>
            <person name="Durkin A.S."/>
            <person name="Haft D.H."/>
            <person name="Kolonay J.F."/>
            <person name="Madupu R."/>
            <person name="Peterson J.D."/>
            <person name="Umayam L.A."/>
            <person name="White O."/>
            <person name="Wolf A.M."/>
            <person name="Vamathevan J.J."/>
            <person name="Weidman J.F."/>
            <person name="Impraim M."/>
            <person name="Lee K."/>
            <person name="Berry K.J."/>
            <person name="Lee C."/>
            <person name="Mueller J."/>
            <person name="Khouri H.M."/>
            <person name="Gill J."/>
            <person name="Utterback T.R."/>
            <person name="McDonald L.A."/>
            <person name="Feldblyum T.V."/>
            <person name="Smith H.O."/>
            <person name="Venter J.C."/>
            <person name="Nealson K.H."/>
            <person name="Fraser C.M."/>
        </authorList>
    </citation>
    <scope>NUCLEOTIDE SEQUENCE [LARGE SCALE GENOMIC DNA]</scope>
    <source>
        <strain>ATCC 700550 / JCM 31522 / CIP 106686 / LMG 19005 / NCIMB 14063 / MR-1</strain>
    </source>
</reference>
<sequence>MNFNATLIGQTVAFIIFVWFCMKFVWPPLMNAIEARQKRIADGLADADRAVKDLELAQAKATDQLKEAKVTANEIIEQANKRKAQIVEEAKTEADAERAKIIAQGKAEIEAERNRVKEDLRKQVATLAIMGAEKILERSIDPAAHSDIVNKLVAEI</sequence>
<gene>
    <name evidence="1" type="primary">atpF</name>
    <name type="ordered locus">SO_4751</name>
</gene>